<protein>
    <recommendedName>
        <fullName evidence="1">Glutamate-1-semialdehyde 2,1-aminomutase</fullName>
        <shortName evidence="1">GSA</shortName>
        <ecNumber evidence="1">5.4.3.8</ecNumber>
    </recommendedName>
    <alternativeName>
        <fullName evidence="1">Glutamate-1-semialdehyde aminotransferase</fullName>
        <shortName evidence="1">GSA-AT</shortName>
    </alternativeName>
</protein>
<dbReference type="EC" id="5.4.3.8" evidence="1"/>
<dbReference type="EMBL" id="FM954972">
    <property type="protein sequence ID" value="CAV19659.1"/>
    <property type="molecule type" value="Genomic_DNA"/>
</dbReference>
<dbReference type="SMR" id="B7VJJ5"/>
<dbReference type="STRING" id="575788.VS_2502"/>
<dbReference type="KEGG" id="vsp:VS_2502"/>
<dbReference type="eggNOG" id="COG0001">
    <property type="taxonomic scope" value="Bacteria"/>
</dbReference>
<dbReference type="HOGENOM" id="CLU_016922_1_5_6"/>
<dbReference type="UniPathway" id="UPA00251">
    <property type="reaction ID" value="UER00317"/>
</dbReference>
<dbReference type="Proteomes" id="UP000009100">
    <property type="component" value="Chromosome 1"/>
</dbReference>
<dbReference type="GO" id="GO:0005737">
    <property type="term" value="C:cytoplasm"/>
    <property type="evidence" value="ECO:0007669"/>
    <property type="project" value="UniProtKB-SubCell"/>
</dbReference>
<dbReference type="GO" id="GO:0042286">
    <property type="term" value="F:glutamate-1-semialdehyde 2,1-aminomutase activity"/>
    <property type="evidence" value="ECO:0007669"/>
    <property type="project" value="UniProtKB-UniRule"/>
</dbReference>
<dbReference type="GO" id="GO:0030170">
    <property type="term" value="F:pyridoxal phosphate binding"/>
    <property type="evidence" value="ECO:0007669"/>
    <property type="project" value="InterPro"/>
</dbReference>
<dbReference type="GO" id="GO:0008483">
    <property type="term" value="F:transaminase activity"/>
    <property type="evidence" value="ECO:0007669"/>
    <property type="project" value="InterPro"/>
</dbReference>
<dbReference type="GO" id="GO:0006782">
    <property type="term" value="P:protoporphyrinogen IX biosynthetic process"/>
    <property type="evidence" value="ECO:0007669"/>
    <property type="project" value="UniProtKB-UniRule"/>
</dbReference>
<dbReference type="CDD" id="cd00610">
    <property type="entry name" value="OAT_like"/>
    <property type="match status" value="1"/>
</dbReference>
<dbReference type="FunFam" id="3.40.640.10:FF:000021">
    <property type="entry name" value="Glutamate-1-semialdehyde 2,1-aminomutase"/>
    <property type="match status" value="1"/>
</dbReference>
<dbReference type="FunFam" id="3.90.1150.10:FF:000012">
    <property type="entry name" value="Glutamate-1-semialdehyde 2,1-aminomutase"/>
    <property type="match status" value="1"/>
</dbReference>
<dbReference type="Gene3D" id="3.90.1150.10">
    <property type="entry name" value="Aspartate Aminotransferase, domain 1"/>
    <property type="match status" value="1"/>
</dbReference>
<dbReference type="Gene3D" id="3.40.640.10">
    <property type="entry name" value="Type I PLP-dependent aspartate aminotransferase-like (Major domain)"/>
    <property type="match status" value="1"/>
</dbReference>
<dbReference type="HAMAP" id="MF_00375">
    <property type="entry name" value="HemL_aminotrans_3"/>
    <property type="match status" value="1"/>
</dbReference>
<dbReference type="InterPro" id="IPR004639">
    <property type="entry name" value="4pyrrol_synth_GluAld_NH2Trfase"/>
</dbReference>
<dbReference type="InterPro" id="IPR005814">
    <property type="entry name" value="Aminotrans_3"/>
</dbReference>
<dbReference type="InterPro" id="IPR049704">
    <property type="entry name" value="Aminotrans_3_PPA_site"/>
</dbReference>
<dbReference type="InterPro" id="IPR015424">
    <property type="entry name" value="PyrdxlP-dep_Trfase"/>
</dbReference>
<dbReference type="InterPro" id="IPR015421">
    <property type="entry name" value="PyrdxlP-dep_Trfase_major"/>
</dbReference>
<dbReference type="InterPro" id="IPR015422">
    <property type="entry name" value="PyrdxlP-dep_Trfase_small"/>
</dbReference>
<dbReference type="NCBIfam" id="TIGR00713">
    <property type="entry name" value="hemL"/>
    <property type="match status" value="1"/>
</dbReference>
<dbReference type="NCBIfam" id="NF000818">
    <property type="entry name" value="PRK00062.1"/>
    <property type="match status" value="1"/>
</dbReference>
<dbReference type="PANTHER" id="PTHR43713">
    <property type="entry name" value="GLUTAMATE-1-SEMIALDEHYDE 2,1-AMINOMUTASE"/>
    <property type="match status" value="1"/>
</dbReference>
<dbReference type="PANTHER" id="PTHR43713:SF3">
    <property type="entry name" value="GLUTAMATE-1-SEMIALDEHYDE 2,1-AMINOMUTASE 1, CHLOROPLASTIC-RELATED"/>
    <property type="match status" value="1"/>
</dbReference>
<dbReference type="Pfam" id="PF00202">
    <property type="entry name" value="Aminotran_3"/>
    <property type="match status" value="1"/>
</dbReference>
<dbReference type="SUPFAM" id="SSF53383">
    <property type="entry name" value="PLP-dependent transferases"/>
    <property type="match status" value="1"/>
</dbReference>
<dbReference type="PROSITE" id="PS00600">
    <property type="entry name" value="AA_TRANSFER_CLASS_3"/>
    <property type="match status" value="1"/>
</dbReference>
<feature type="chain" id="PRO_1000201039" description="Glutamate-1-semialdehyde 2,1-aminomutase">
    <location>
        <begin position="1"/>
        <end position="431"/>
    </location>
</feature>
<feature type="modified residue" description="N6-(pyridoxal phosphate)lysine" evidence="1">
    <location>
        <position position="265"/>
    </location>
</feature>
<comment type="catalytic activity">
    <reaction evidence="1">
        <text>(S)-4-amino-5-oxopentanoate = 5-aminolevulinate</text>
        <dbReference type="Rhea" id="RHEA:14265"/>
        <dbReference type="ChEBI" id="CHEBI:57501"/>
        <dbReference type="ChEBI" id="CHEBI:356416"/>
        <dbReference type="EC" id="5.4.3.8"/>
    </reaction>
</comment>
<comment type="cofactor">
    <cofactor evidence="1">
        <name>pyridoxal 5'-phosphate</name>
        <dbReference type="ChEBI" id="CHEBI:597326"/>
    </cofactor>
</comment>
<comment type="pathway">
    <text evidence="1">Porphyrin-containing compound metabolism; protoporphyrin-IX biosynthesis; 5-aminolevulinate from L-glutamyl-tRNA(Glu): step 2/2.</text>
</comment>
<comment type="subunit">
    <text evidence="1">Homodimer.</text>
</comment>
<comment type="subcellular location">
    <subcellularLocation>
        <location evidence="1">Cytoplasm</location>
    </subcellularLocation>
</comment>
<comment type="similarity">
    <text evidence="1">Belongs to the class-III pyridoxal-phosphate-dependent aminotransferase family. HemL subfamily.</text>
</comment>
<proteinExistence type="inferred from homology"/>
<name>GSA_VIBA3</name>
<evidence type="ECO:0000255" key="1">
    <source>
        <dbReference type="HAMAP-Rule" id="MF_00375"/>
    </source>
</evidence>
<organism>
    <name type="scientific">Vibrio atlanticus (strain LGP32)</name>
    <name type="common">Vibrio splendidus (strain Mel32)</name>
    <dbReference type="NCBI Taxonomy" id="575788"/>
    <lineage>
        <taxon>Bacteria</taxon>
        <taxon>Pseudomonadati</taxon>
        <taxon>Pseudomonadota</taxon>
        <taxon>Gammaproteobacteria</taxon>
        <taxon>Vibrionales</taxon>
        <taxon>Vibrionaceae</taxon>
        <taxon>Vibrio</taxon>
    </lineage>
</organism>
<reference key="1">
    <citation type="submission" date="2009-02" db="EMBL/GenBank/DDBJ databases">
        <title>Vibrio splendidus str. LGP32 complete genome.</title>
        <authorList>
            <person name="Mazel D."/>
            <person name="Le Roux F."/>
        </authorList>
    </citation>
    <scope>NUCLEOTIDE SEQUENCE [LARGE SCALE GENOMIC DNA]</scope>
    <source>
        <strain>LGP32</strain>
    </source>
</reference>
<accession>B7VJJ5</accession>
<sequence length="431" mass="46065">MTKSAELYEKAQQTIPGGVNSPVRAFNGVGGSPIFVERADGPLIFDADGKAYIDYVGSWGPMILGHNHVVIRDAVIAAAQRGLSFGAPTETEIKMAELVSEMVPSMEQLRMVSSGTEATMSAIRLARGFTGRDKILKFEGCYHGHADSLLVKAGSGALTLGQPSSPGVPADFAKLTLTATFNNLDSVREIFAANKGEIACIIVEPVAGNMNCIPPVEGFHEGLREICDQEGALLIFDEVMTGFRVAEGCAQAYYNIKPDLTCLGKVIGGGMPVGAFGGRKDVMQYIAPTGPVYQAGTLSGNPVAMAAGYACLNLLREEGNEKRLASKTKQLANGFKQLADKHGIPMLVHQVGGMFGFFFTDQETVTCYEDVTKCDVERFKRFFHLMLDHGVYLAPSAFEASFTSLAHGSKELDATLEAADRSLAIIAAESK</sequence>
<keyword id="KW-0963">Cytoplasm</keyword>
<keyword id="KW-0413">Isomerase</keyword>
<keyword id="KW-0627">Porphyrin biosynthesis</keyword>
<keyword id="KW-0663">Pyridoxal phosphate</keyword>
<gene>
    <name evidence="1" type="primary">hemL</name>
    <name type="ordered locus">VS_2502</name>
</gene>